<comment type="function">
    <text evidence="1">Produces ATP from ADP in the presence of a proton gradient across the membrane. The gamma chain is believed to be important in regulating ATPase activity and the flow of protons through the CF(0) complex.</text>
</comment>
<comment type="subunit">
    <text evidence="1">F-type ATPases have 2 components, CF(1) - the catalytic core - and CF(0) - the membrane proton channel. CF(1) has five subunits: alpha(3), beta(3), gamma(1), delta(1), epsilon(1). CF(0) has three main subunits: a, b and c.</text>
</comment>
<comment type="subcellular location">
    <subcellularLocation>
        <location evidence="1">Cell membrane</location>
        <topology evidence="1">Peripheral membrane protein</topology>
    </subcellularLocation>
</comment>
<comment type="similarity">
    <text evidence="1">Belongs to the ATPase gamma chain family.</text>
</comment>
<keyword id="KW-0066">ATP synthesis</keyword>
<keyword id="KW-1003">Cell membrane</keyword>
<keyword id="KW-0139">CF(1)</keyword>
<keyword id="KW-0375">Hydrogen ion transport</keyword>
<keyword id="KW-0406">Ion transport</keyword>
<keyword id="KW-0472">Membrane</keyword>
<keyword id="KW-1185">Reference proteome</keyword>
<keyword id="KW-0813">Transport</keyword>
<accession>Q8XID3</accession>
<feature type="chain" id="PRO_0000073267" description="ATP synthase gamma chain">
    <location>
        <begin position="1"/>
        <end position="283"/>
    </location>
</feature>
<proteinExistence type="inferred from homology"/>
<evidence type="ECO:0000255" key="1">
    <source>
        <dbReference type="HAMAP-Rule" id="MF_00815"/>
    </source>
</evidence>
<name>ATPG_CLOPE</name>
<gene>
    <name evidence="1" type="primary">atpG</name>
    <name type="ordered locus">CPE2188</name>
</gene>
<protein>
    <recommendedName>
        <fullName evidence="1">ATP synthase gamma chain</fullName>
    </recommendedName>
    <alternativeName>
        <fullName evidence="1">ATP synthase F1 sector gamma subunit</fullName>
    </alternativeName>
    <alternativeName>
        <fullName evidence="1">F-ATPase gamma subunit</fullName>
    </alternativeName>
</protein>
<sequence length="283" mass="31085">MAGAGLLEIKRRIKSIKNTRKITKAMGLVATSKLRKARQKLTENNQYFSSLDEIARELIGSLNSNNNPLLKPNDNPKKLIILLASDSGLCGGFNGNTAAFVRDNYENNLENIEAVVVGKKGIHYVKKNKISTLAEYVDLGDTPNVGDASTIVNKAVKEFTDGNFGEVSLVYTKFFSPVKQEVVEEKLLPLDLTGEKGKVSFLIEPDEDEIIDSLVSSYLKGKFMNAMFNSKASEQSARMQAMDGATKNADDLLNSLDAKYNRIRQSIITQEISEIVGGAEAQK</sequence>
<dbReference type="EMBL" id="BA000016">
    <property type="protein sequence ID" value="BAB81894.1"/>
    <property type="molecule type" value="Genomic_DNA"/>
</dbReference>
<dbReference type="RefSeq" id="WP_003452288.1">
    <property type="nucleotide sequence ID" value="NC_003366.1"/>
</dbReference>
<dbReference type="SMR" id="Q8XID3"/>
<dbReference type="STRING" id="195102.gene:10491467"/>
<dbReference type="GeneID" id="93001269"/>
<dbReference type="KEGG" id="cpe:CPE2188"/>
<dbReference type="HOGENOM" id="CLU_050669_0_1_9"/>
<dbReference type="Proteomes" id="UP000000818">
    <property type="component" value="Chromosome"/>
</dbReference>
<dbReference type="GO" id="GO:0005886">
    <property type="term" value="C:plasma membrane"/>
    <property type="evidence" value="ECO:0007669"/>
    <property type="project" value="UniProtKB-SubCell"/>
</dbReference>
<dbReference type="GO" id="GO:0045259">
    <property type="term" value="C:proton-transporting ATP synthase complex"/>
    <property type="evidence" value="ECO:0007669"/>
    <property type="project" value="UniProtKB-KW"/>
</dbReference>
<dbReference type="GO" id="GO:0005524">
    <property type="term" value="F:ATP binding"/>
    <property type="evidence" value="ECO:0007669"/>
    <property type="project" value="UniProtKB-UniRule"/>
</dbReference>
<dbReference type="GO" id="GO:0046933">
    <property type="term" value="F:proton-transporting ATP synthase activity, rotational mechanism"/>
    <property type="evidence" value="ECO:0007669"/>
    <property type="project" value="UniProtKB-UniRule"/>
</dbReference>
<dbReference type="GO" id="GO:0042777">
    <property type="term" value="P:proton motive force-driven plasma membrane ATP synthesis"/>
    <property type="evidence" value="ECO:0007669"/>
    <property type="project" value="UniProtKB-UniRule"/>
</dbReference>
<dbReference type="CDD" id="cd12151">
    <property type="entry name" value="F1-ATPase_gamma"/>
    <property type="match status" value="1"/>
</dbReference>
<dbReference type="Gene3D" id="3.40.1380.10">
    <property type="match status" value="1"/>
</dbReference>
<dbReference type="Gene3D" id="1.10.287.80">
    <property type="entry name" value="ATP synthase, gamma subunit, helix hairpin domain"/>
    <property type="match status" value="1"/>
</dbReference>
<dbReference type="HAMAP" id="MF_00815">
    <property type="entry name" value="ATP_synth_gamma_bact"/>
    <property type="match status" value="1"/>
</dbReference>
<dbReference type="InterPro" id="IPR035968">
    <property type="entry name" value="ATP_synth_F1_ATPase_gsu"/>
</dbReference>
<dbReference type="InterPro" id="IPR000131">
    <property type="entry name" value="ATP_synth_F1_gsu"/>
</dbReference>
<dbReference type="InterPro" id="IPR023632">
    <property type="entry name" value="ATP_synth_F1_gsu_CS"/>
</dbReference>
<dbReference type="NCBIfam" id="TIGR01146">
    <property type="entry name" value="ATPsyn_F1gamma"/>
    <property type="match status" value="1"/>
</dbReference>
<dbReference type="PANTHER" id="PTHR11693">
    <property type="entry name" value="ATP SYNTHASE GAMMA CHAIN"/>
    <property type="match status" value="1"/>
</dbReference>
<dbReference type="PANTHER" id="PTHR11693:SF22">
    <property type="entry name" value="ATP SYNTHASE SUBUNIT GAMMA, MITOCHONDRIAL"/>
    <property type="match status" value="1"/>
</dbReference>
<dbReference type="Pfam" id="PF00231">
    <property type="entry name" value="ATP-synt"/>
    <property type="match status" value="1"/>
</dbReference>
<dbReference type="PRINTS" id="PR00126">
    <property type="entry name" value="ATPASEGAMMA"/>
</dbReference>
<dbReference type="SUPFAM" id="SSF52943">
    <property type="entry name" value="ATP synthase (F1-ATPase), gamma subunit"/>
    <property type="match status" value="1"/>
</dbReference>
<dbReference type="PROSITE" id="PS00153">
    <property type="entry name" value="ATPASE_GAMMA"/>
    <property type="match status" value="1"/>
</dbReference>
<organism>
    <name type="scientific">Clostridium perfringens (strain 13 / Type A)</name>
    <dbReference type="NCBI Taxonomy" id="195102"/>
    <lineage>
        <taxon>Bacteria</taxon>
        <taxon>Bacillati</taxon>
        <taxon>Bacillota</taxon>
        <taxon>Clostridia</taxon>
        <taxon>Eubacteriales</taxon>
        <taxon>Clostridiaceae</taxon>
        <taxon>Clostridium</taxon>
    </lineage>
</organism>
<reference key="1">
    <citation type="journal article" date="2002" name="Proc. Natl. Acad. Sci. U.S.A.">
        <title>Complete genome sequence of Clostridium perfringens, an anaerobic flesh-eater.</title>
        <authorList>
            <person name="Shimizu T."/>
            <person name="Ohtani K."/>
            <person name="Hirakawa H."/>
            <person name="Ohshima K."/>
            <person name="Yamashita A."/>
            <person name="Shiba T."/>
            <person name="Ogasawara N."/>
            <person name="Hattori M."/>
            <person name="Kuhara S."/>
            <person name="Hayashi H."/>
        </authorList>
    </citation>
    <scope>NUCLEOTIDE SEQUENCE [LARGE SCALE GENOMIC DNA]</scope>
    <source>
        <strain>13 / Type A</strain>
    </source>
</reference>